<accession>A3NQK2</accession>
<keyword id="KW-0004">4Fe-4S</keyword>
<keyword id="KW-0067">ATP-binding</keyword>
<keyword id="KW-0963">Cytoplasm</keyword>
<keyword id="KW-0408">Iron</keyword>
<keyword id="KW-0411">Iron-sulfur</keyword>
<keyword id="KW-0460">Magnesium</keyword>
<keyword id="KW-0479">Metal-binding</keyword>
<keyword id="KW-0547">Nucleotide-binding</keyword>
<keyword id="KW-0694">RNA-binding</keyword>
<keyword id="KW-0808">Transferase</keyword>
<keyword id="KW-0819">tRNA processing</keyword>
<keyword id="KW-0820">tRNA-binding</keyword>
<proteinExistence type="inferred from homology"/>
<dbReference type="EC" id="2.8.1.-" evidence="1"/>
<dbReference type="EMBL" id="CP000572">
    <property type="protein sequence ID" value="ABN89571.1"/>
    <property type="molecule type" value="Genomic_DNA"/>
</dbReference>
<dbReference type="RefSeq" id="WP_004189298.1">
    <property type="nucleotide sequence ID" value="NC_009076.1"/>
</dbReference>
<dbReference type="SMR" id="A3NQK2"/>
<dbReference type="GeneID" id="93058831"/>
<dbReference type="KEGG" id="bpl:BURPS1106A_0340"/>
<dbReference type="HOGENOM" id="CLU_026481_0_0_4"/>
<dbReference type="Proteomes" id="UP000006738">
    <property type="component" value="Chromosome I"/>
</dbReference>
<dbReference type="GO" id="GO:0005737">
    <property type="term" value="C:cytoplasm"/>
    <property type="evidence" value="ECO:0007669"/>
    <property type="project" value="UniProtKB-SubCell"/>
</dbReference>
<dbReference type="GO" id="GO:0051539">
    <property type="term" value="F:4 iron, 4 sulfur cluster binding"/>
    <property type="evidence" value="ECO:0007669"/>
    <property type="project" value="UniProtKB-UniRule"/>
</dbReference>
<dbReference type="GO" id="GO:0005524">
    <property type="term" value="F:ATP binding"/>
    <property type="evidence" value="ECO:0007669"/>
    <property type="project" value="UniProtKB-UniRule"/>
</dbReference>
<dbReference type="GO" id="GO:0000287">
    <property type="term" value="F:magnesium ion binding"/>
    <property type="evidence" value="ECO:0007669"/>
    <property type="project" value="UniProtKB-UniRule"/>
</dbReference>
<dbReference type="GO" id="GO:0016783">
    <property type="term" value="F:sulfurtransferase activity"/>
    <property type="evidence" value="ECO:0007669"/>
    <property type="project" value="UniProtKB-UniRule"/>
</dbReference>
<dbReference type="GO" id="GO:0000049">
    <property type="term" value="F:tRNA binding"/>
    <property type="evidence" value="ECO:0007669"/>
    <property type="project" value="UniProtKB-KW"/>
</dbReference>
<dbReference type="GO" id="GO:0034227">
    <property type="term" value="P:tRNA thio-modification"/>
    <property type="evidence" value="ECO:0007669"/>
    <property type="project" value="UniProtKB-UniRule"/>
</dbReference>
<dbReference type="CDD" id="cd24138">
    <property type="entry name" value="TtcA-like"/>
    <property type="match status" value="1"/>
</dbReference>
<dbReference type="Gene3D" id="3.40.50.620">
    <property type="entry name" value="HUPs"/>
    <property type="match status" value="1"/>
</dbReference>
<dbReference type="HAMAP" id="MF_01850">
    <property type="entry name" value="TtcA"/>
    <property type="match status" value="1"/>
</dbReference>
<dbReference type="InterPro" id="IPR014729">
    <property type="entry name" value="Rossmann-like_a/b/a_fold"/>
</dbReference>
<dbReference type="InterPro" id="IPR011063">
    <property type="entry name" value="TilS/TtcA_N"/>
</dbReference>
<dbReference type="InterPro" id="IPR012089">
    <property type="entry name" value="tRNA_Cyd_32_2_STrfase"/>
</dbReference>
<dbReference type="NCBIfam" id="NF007972">
    <property type="entry name" value="PRK10696.1"/>
    <property type="match status" value="1"/>
</dbReference>
<dbReference type="PANTHER" id="PTHR43686:SF1">
    <property type="entry name" value="AMINOTRAN_5 DOMAIN-CONTAINING PROTEIN"/>
    <property type="match status" value="1"/>
</dbReference>
<dbReference type="PANTHER" id="PTHR43686">
    <property type="entry name" value="SULFURTRANSFERASE-RELATED"/>
    <property type="match status" value="1"/>
</dbReference>
<dbReference type="Pfam" id="PF01171">
    <property type="entry name" value="ATP_bind_3"/>
    <property type="match status" value="1"/>
</dbReference>
<dbReference type="SUPFAM" id="SSF52402">
    <property type="entry name" value="Adenine nucleotide alpha hydrolases-like"/>
    <property type="match status" value="1"/>
</dbReference>
<evidence type="ECO:0000255" key="1">
    <source>
        <dbReference type="HAMAP-Rule" id="MF_01850"/>
    </source>
</evidence>
<protein>
    <recommendedName>
        <fullName evidence="1">tRNA-cytidine(32) 2-sulfurtransferase</fullName>
        <ecNumber evidence="1">2.8.1.-</ecNumber>
    </recommendedName>
    <alternativeName>
        <fullName evidence="1">Two-thiocytidine biosynthesis protein A</fullName>
    </alternativeName>
    <alternativeName>
        <fullName evidence="1">tRNA 2-thiocytidine biosynthesis protein TtcA</fullName>
    </alternativeName>
</protein>
<organism>
    <name type="scientific">Burkholderia pseudomallei (strain 1106a)</name>
    <dbReference type="NCBI Taxonomy" id="357348"/>
    <lineage>
        <taxon>Bacteria</taxon>
        <taxon>Pseudomonadati</taxon>
        <taxon>Pseudomonadota</taxon>
        <taxon>Betaproteobacteria</taxon>
        <taxon>Burkholderiales</taxon>
        <taxon>Burkholderiaceae</taxon>
        <taxon>Burkholderia</taxon>
        <taxon>pseudomallei group</taxon>
    </lineage>
</organism>
<gene>
    <name evidence="1" type="primary">ttcA</name>
    <name type="ordered locus">BURPS1106A_0340</name>
</gene>
<reference key="1">
    <citation type="journal article" date="2010" name="Genome Biol. Evol.">
        <title>Continuing evolution of Burkholderia mallei through genome reduction and large-scale rearrangements.</title>
        <authorList>
            <person name="Losada L."/>
            <person name="Ronning C.M."/>
            <person name="DeShazer D."/>
            <person name="Woods D."/>
            <person name="Fedorova N."/>
            <person name="Kim H.S."/>
            <person name="Shabalina S.A."/>
            <person name="Pearson T.R."/>
            <person name="Brinkac L."/>
            <person name="Tan P."/>
            <person name="Nandi T."/>
            <person name="Crabtree J."/>
            <person name="Badger J."/>
            <person name="Beckstrom-Sternberg S."/>
            <person name="Saqib M."/>
            <person name="Schutzer S.E."/>
            <person name="Keim P."/>
            <person name="Nierman W.C."/>
        </authorList>
    </citation>
    <scope>NUCLEOTIDE SEQUENCE [LARGE SCALE GENOMIC DNA]</scope>
    <source>
        <strain>1106a</strain>
    </source>
</reference>
<feature type="chain" id="PRO_0000348692" description="tRNA-cytidine(32) 2-sulfurtransferase">
    <location>
        <begin position="1"/>
        <end position="331"/>
    </location>
</feature>
<feature type="short sequence motif" description="PP-loop motif" evidence="1">
    <location>
        <begin position="73"/>
        <end position="78"/>
    </location>
</feature>
<feature type="binding site" evidence="1">
    <location>
        <position position="148"/>
    </location>
    <ligand>
        <name>[4Fe-4S] cluster</name>
        <dbReference type="ChEBI" id="CHEBI:49883"/>
    </ligand>
</feature>
<feature type="binding site" evidence="1">
    <location>
        <position position="151"/>
    </location>
    <ligand>
        <name>[4Fe-4S] cluster</name>
        <dbReference type="ChEBI" id="CHEBI:49883"/>
    </ligand>
</feature>
<feature type="binding site" evidence="1">
    <location>
        <position position="239"/>
    </location>
    <ligand>
        <name>[4Fe-4S] cluster</name>
        <dbReference type="ChEBI" id="CHEBI:49883"/>
    </ligand>
</feature>
<comment type="function">
    <text evidence="1">Catalyzes the ATP-dependent 2-thiolation of cytidine in position 32 of tRNA, to form 2-thiocytidine (s(2)C32). The sulfur atoms are provided by the cysteine/cysteine desulfurase (IscS) system.</text>
</comment>
<comment type="catalytic activity">
    <reaction evidence="1">
        <text>cytidine(32) in tRNA + S-sulfanyl-L-cysteinyl-[cysteine desulfurase] + AH2 + ATP = 2-thiocytidine(32) in tRNA + L-cysteinyl-[cysteine desulfurase] + A + AMP + diphosphate + H(+)</text>
        <dbReference type="Rhea" id="RHEA:57048"/>
        <dbReference type="Rhea" id="RHEA-COMP:10288"/>
        <dbReference type="Rhea" id="RHEA-COMP:12157"/>
        <dbReference type="Rhea" id="RHEA-COMP:12158"/>
        <dbReference type="Rhea" id="RHEA-COMP:14821"/>
        <dbReference type="ChEBI" id="CHEBI:13193"/>
        <dbReference type="ChEBI" id="CHEBI:15378"/>
        <dbReference type="ChEBI" id="CHEBI:17499"/>
        <dbReference type="ChEBI" id="CHEBI:29950"/>
        <dbReference type="ChEBI" id="CHEBI:30616"/>
        <dbReference type="ChEBI" id="CHEBI:33019"/>
        <dbReference type="ChEBI" id="CHEBI:61963"/>
        <dbReference type="ChEBI" id="CHEBI:82748"/>
        <dbReference type="ChEBI" id="CHEBI:141453"/>
        <dbReference type="ChEBI" id="CHEBI:456215"/>
    </reaction>
    <physiologicalReaction direction="left-to-right" evidence="1">
        <dbReference type="Rhea" id="RHEA:57049"/>
    </physiologicalReaction>
</comment>
<comment type="cofactor">
    <cofactor evidence="1">
        <name>Mg(2+)</name>
        <dbReference type="ChEBI" id="CHEBI:18420"/>
    </cofactor>
</comment>
<comment type="cofactor">
    <cofactor evidence="1">
        <name>[4Fe-4S] cluster</name>
        <dbReference type="ChEBI" id="CHEBI:49883"/>
    </cofactor>
    <text evidence="1">Binds 1 [4Fe-4S] cluster per subunit. The cluster is chelated by three Cys residues, the fourth Fe has a free coordination site that may bind a sulfur atom transferred from the persulfide of IscS.</text>
</comment>
<comment type="pathway">
    <text evidence="1">tRNA modification.</text>
</comment>
<comment type="subunit">
    <text evidence="1">Homodimer.</text>
</comment>
<comment type="subcellular location">
    <subcellularLocation>
        <location evidence="1">Cytoplasm</location>
    </subcellularLocation>
</comment>
<comment type="miscellaneous">
    <text evidence="1">The thiolation reaction likely consists of two steps: a first activation step by ATP to form an adenylated intermediate of the target base of tRNA, and a second nucleophilic substitution step of the sulfur (S) atom supplied by the hydrosulfide attached to the Fe-S cluster.</text>
</comment>
<comment type="similarity">
    <text evidence="1">Belongs to the TtcA family.</text>
</comment>
<sequence>MNAPHTPHLNEAEAAAAVEANAAELGRRALTRREQKEAYENNKLFKRLVRQVGQAIGDYNMIEHGDKVMVCLSGGKDSYALLDILLRLRERAPIDFDIVAVNLDQKQPGFPEHVLPEYLTKIGVPFHIENQDTYSIVKRLVPEGKTTCSLCSRLRRGILYRVAGELGATKIALGHHRDDIVQTLLLNMFYGGKLKGMPPKLQSDDGKNIVIRPLAYAKETDLEKYAELREFPIIPCNLCGSQPNLKRAEMKALIRDWDKRFPGRVDNMFNALANVVPSHLMDARLFPFAGLRATGEADPNGDIAFDEDPCGTDASAPGGAKSVSIVQFDDL</sequence>
<name>TTCA_BURP0</name>